<name>NUSB_STRPC</name>
<reference key="1">
    <citation type="journal article" date="2006" name="Proc. Natl. Acad. Sci. U.S.A.">
        <title>Molecular genetic anatomy of inter- and intraserotype variation in the human bacterial pathogen group A Streptococcus.</title>
        <authorList>
            <person name="Beres S.B."/>
            <person name="Richter E.W."/>
            <person name="Nagiec M.J."/>
            <person name="Sumby P."/>
            <person name="Porcella S.F."/>
            <person name="DeLeo F.R."/>
            <person name="Musser J.M."/>
        </authorList>
    </citation>
    <scope>NUCLEOTIDE SEQUENCE [LARGE SCALE GENOMIC DNA]</scope>
    <source>
        <strain>MGAS9429</strain>
    </source>
</reference>
<keyword id="KW-0694">RNA-binding</keyword>
<keyword id="KW-0804">Transcription</keyword>
<keyword id="KW-0889">Transcription antitermination</keyword>
<keyword id="KW-0805">Transcription regulation</keyword>
<sequence>MTNSFQNSRRDLRERAFQALFNIEMGAELLAASQFAYGYDKVTGEDAQVLELPIFLLSLVTGVNNHKEELDNLISTHLKKGWSLERLTLTDKTLLRLGLFEIKYFDETPDRVALNEIIEVAKKYSDETSAKFINGLLSQYVSEAPSANKS</sequence>
<proteinExistence type="inferred from homology"/>
<accession>Q1JK87</accession>
<feature type="chain" id="PRO_0000265604" description="Transcription antitermination protein NusB">
    <location>
        <begin position="1"/>
        <end position="150"/>
    </location>
</feature>
<organism>
    <name type="scientific">Streptococcus pyogenes serotype M12 (strain MGAS9429)</name>
    <dbReference type="NCBI Taxonomy" id="370551"/>
    <lineage>
        <taxon>Bacteria</taxon>
        <taxon>Bacillati</taxon>
        <taxon>Bacillota</taxon>
        <taxon>Bacilli</taxon>
        <taxon>Lactobacillales</taxon>
        <taxon>Streptococcaceae</taxon>
        <taxon>Streptococcus</taxon>
    </lineage>
</organism>
<evidence type="ECO:0000255" key="1">
    <source>
        <dbReference type="HAMAP-Rule" id="MF_00073"/>
    </source>
</evidence>
<evidence type="ECO:0000305" key="2"/>
<dbReference type="EMBL" id="CP000259">
    <property type="protein sequence ID" value="ABF32736.1"/>
    <property type="status" value="ALT_INIT"/>
    <property type="molecule type" value="Genomic_DNA"/>
</dbReference>
<dbReference type="RefSeq" id="WP_002988501.1">
    <property type="nucleotide sequence ID" value="NC_008021.1"/>
</dbReference>
<dbReference type="SMR" id="Q1JK87"/>
<dbReference type="GeneID" id="69900353"/>
<dbReference type="KEGG" id="spk:MGAS9429_Spy1549"/>
<dbReference type="HOGENOM" id="CLU_087843_3_2_9"/>
<dbReference type="Proteomes" id="UP000002433">
    <property type="component" value="Chromosome"/>
</dbReference>
<dbReference type="GO" id="GO:0005829">
    <property type="term" value="C:cytosol"/>
    <property type="evidence" value="ECO:0007669"/>
    <property type="project" value="TreeGrafter"/>
</dbReference>
<dbReference type="GO" id="GO:0003723">
    <property type="term" value="F:RNA binding"/>
    <property type="evidence" value="ECO:0007669"/>
    <property type="project" value="UniProtKB-UniRule"/>
</dbReference>
<dbReference type="GO" id="GO:0006353">
    <property type="term" value="P:DNA-templated transcription termination"/>
    <property type="evidence" value="ECO:0007669"/>
    <property type="project" value="UniProtKB-UniRule"/>
</dbReference>
<dbReference type="GO" id="GO:0031564">
    <property type="term" value="P:transcription antitermination"/>
    <property type="evidence" value="ECO:0007669"/>
    <property type="project" value="UniProtKB-KW"/>
</dbReference>
<dbReference type="Gene3D" id="1.10.940.10">
    <property type="entry name" value="NusB-like"/>
    <property type="match status" value="1"/>
</dbReference>
<dbReference type="HAMAP" id="MF_00073">
    <property type="entry name" value="NusB"/>
    <property type="match status" value="1"/>
</dbReference>
<dbReference type="InterPro" id="IPR035926">
    <property type="entry name" value="NusB-like_sf"/>
</dbReference>
<dbReference type="InterPro" id="IPR011605">
    <property type="entry name" value="NusB_fam"/>
</dbReference>
<dbReference type="InterPro" id="IPR006027">
    <property type="entry name" value="NusB_RsmB_TIM44"/>
</dbReference>
<dbReference type="NCBIfam" id="TIGR01951">
    <property type="entry name" value="nusB"/>
    <property type="match status" value="1"/>
</dbReference>
<dbReference type="NCBIfam" id="NF001223">
    <property type="entry name" value="PRK00202.1-1"/>
    <property type="match status" value="1"/>
</dbReference>
<dbReference type="PANTHER" id="PTHR11078:SF3">
    <property type="entry name" value="ANTITERMINATION NUSB DOMAIN-CONTAINING PROTEIN"/>
    <property type="match status" value="1"/>
</dbReference>
<dbReference type="PANTHER" id="PTHR11078">
    <property type="entry name" value="N UTILIZATION SUBSTANCE PROTEIN B-RELATED"/>
    <property type="match status" value="1"/>
</dbReference>
<dbReference type="Pfam" id="PF01029">
    <property type="entry name" value="NusB"/>
    <property type="match status" value="1"/>
</dbReference>
<dbReference type="SUPFAM" id="SSF48013">
    <property type="entry name" value="NusB-like"/>
    <property type="match status" value="1"/>
</dbReference>
<gene>
    <name evidence="1" type="primary">nusB</name>
    <name type="ordered locus">MGAS9429_Spy1549</name>
</gene>
<protein>
    <recommendedName>
        <fullName evidence="1">Transcription antitermination protein NusB</fullName>
    </recommendedName>
    <alternativeName>
        <fullName evidence="1">Antitermination factor NusB</fullName>
    </alternativeName>
</protein>
<comment type="function">
    <text evidence="1">Involved in transcription antitermination. Required for transcription of ribosomal RNA (rRNA) genes. Binds specifically to the boxA antiterminator sequence of the ribosomal RNA (rrn) operons.</text>
</comment>
<comment type="similarity">
    <text evidence="1">Belongs to the NusB family.</text>
</comment>
<comment type="sequence caution" evidence="2">
    <conflict type="erroneous initiation">
        <sequence resource="EMBL-CDS" id="ABF32736"/>
    </conflict>
</comment>